<organism>
    <name type="scientific">Rattus norvegicus</name>
    <name type="common">Rat</name>
    <dbReference type="NCBI Taxonomy" id="10116"/>
    <lineage>
        <taxon>Eukaryota</taxon>
        <taxon>Metazoa</taxon>
        <taxon>Chordata</taxon>
        <taxon>Craniata</taxon>
        <taxon>Vertebrata</taxon>
        <taxon>Euteleostomi</taxon>
        <taxon>Mammalia</taxon>
        <taxon>Eutheria</taxon>
        <taxon>Euarchontoglires</taxon>
        <taxon>Glires</taxon>
        <taxon>Rodentia</taxon>
        <taxon>Myomorpha</taxon>
        <taxon>Muroidea</taxon>
        <taxon>Muridae</taxon>
        <taxon>Murinae</taxon>
        <taxon>Rattus</taxon>
    </lineage>
</organism>
<feature type="chain" id="PRO_0000405817" description="Coiled-coil domain-containing protein 39">
    <location>
        <begin position="1"/>
        <end position="934"/>
    </location>
</feature>
<feature type="region of interest" description="Disordered" evidence="5">
    <location>
        <begin position="866"/>
        <end position="934"/>
    </location>
</feature>
<feature type="coiled-coil region" evidence="4">
    <location>
        <begin position="17"/>
        <end position="133"/>
    </location>
</feature>
<feature type="coiled-coil region" evidence="4">
    <location>
        <begin position="164"/>
        <end position="512"/>
    </location>
</feature>
<feature type="coiled-coil region" evidence="4">
    <location>
        <begin position="540"/>
        <end position="615"/>
    </location>
</feature>
<feature type="coiled-coil region" evidence="4">
    <location>
        <begin position="664"/>
        <end position="826"/>
    </location>
</feature>
<feature type="compositionally biased region" description="Low complexity" evidence="5">
    <location>
        <begin position="873"/>
        <end position="892"/>
    </location>
</feature>
<feature type="compositionally biased region" description="Low complexity" evidence="5">
    <location>
        <begin position="912"/>
        <end position="925"/>
    </location>
</feature>
<feature type="modified residue" description="Phosphoserine" evidence="2">
    <location>
        <position position="887"/>
    </location>
</feature>
<feature type="modified residue" description="Phosphoserine" evidence="2">
    <location>
        <position position="895"/>
    </location>
</feature>
<reference key="1">
    <citation type="submission" date="2005-07" db="EMBL/GenBank/DDBJ databases">
        <authorList>
            <person name="Mural R.J."/>
            <person name="Adams M.D."/>
            <person name="Myers E.W."/>
            <person name="Smith H.O."/>
            <person name="Venter J.C."/>
        </authorList>
    </citation>
    <scope>NUCLEOTIDE SEQUENCE [LARGE SCALE GENOMIC DNA]</scope>
    <source>
        <strain>Brown Norway</strain>
    </source>
</reference>
<protein>
    <recommendedName>
        <fullName evidence="6">Coiled-coil domain-containing protein 39</fullName>
    </recommendedName>
</protein>
<evidence type="ECO:0000250" key="1">
    <source>
        <dbReference type="UniProtKB" id="A8IQT2"/>
    </source>
</evidence>
<evidence type="ECO:0000250" key="2">
    <source>
        <dbReference type="UniProtKB" id="Q9D5Y1"/>
    </source>
</evidence>
<evidence type="ECO:0000250" key="3">
    <source>
        <dbReference type="UniProtKB" id="Q9UFE4"/>
    </source>
</evidence>
<evidence type="ECO:0000255" key="4"/>
<evidence type="ECO:0000256" key="5">
    <source>
        <dbReference type="SAM" id="MobiDB-lite"/>
    </source>
</evidence>
<evidence type="ECO:0000305" key="6"/>
<gene>
    <name type="primary">Ccdc39</name>
</gene>
<name>CCD39_RAT</name>
<accession>D3Z8K2</accession>
<accession>D4A2M2</accession>
<keyword id="KW-0966">Cell projection</keyword>
<keyword id="KW-0969">Cilium</keyword>
<keyword id="KW-0175">Coiled coil</keyword>
<keyword id="KW-0963">Cytoplasm</keyword>
<keyword id="KW-0206">Cytoskeleton</keyword>
<keyword id="KW-0597">Phosphoprotein</keyword>
<keyword id="KW-1185">Reference proteome</keyword>
<comment type="function">
    <text evidence="1 3">Required for assembly of dynein regulatory complex (DRC) and inner dynein arm (IDA) complexes, which are responsible for ciliary beat regulation, thereby playing a central role in motility in cilia and flagella. Probably acts together with CCDC40 to form a molecular ruler that determines the 96 nanometer (nm) repeat length and arrangements of components in cilia and flagella. Not required for outer dynein arm complexes assembly.</text>
</comment>
<comment type="subcellular location">
    <subcellularLocation>
        <location evidence="3">Cytoplasm</location>
        <location evidence="3">Cytoskeleton</location>
        <location evidence="3">Cilium axoneme</location>
    </subcellularLocation>
    <text evidence="3">CCDC40 is required for localization to axonemes.</text>
</comment>
<comment type="similarity">
    <text evidence="6">Belongs to the CCDC39 family.</text>
</comment>
<comment type="sequence caution" evidence="6">
    <conflict type="erroneous gene model prediction">
        <sequence resource="EMBL-CDS" id="EDM01224"/>
    </conflict>
</comment>
<sequence>MSSEFLSELHWEDGFAIPVANQENKILEDQLAKLHKEKSNLQDQLRDYEDRINSMSSHLKNVNQEFLFTQSLYKARECEIESEEHFKAIAERELGRVKDEIQQLEKEMAIILERKNDKENAIFKATQKLDGLKCQMNWDQQALEAWLEESAHKDSDSLTLQKYSQQDNNKIRALTLKLEKLTMECNEKRKLLDNELTETLSAQLELDKAAQDFRKIHVERQELIQQWENTIEQMQRRDQEIDNCALALARIKQEAREKEGVVREKIKFLENEVGNNVEYERRISIAERKVSKCRMEYQRQEANRNQLKDELDTLKTTLNRTSSDLEALRKNISKVKKDILDETGRLQKLKHHNEIVKHKLKMITEKTISIEEKATNMEDMLKEEEKNLKEVEVQLNIVKGVLFKKVQELQSAITKEKALGSEIEGTRSSLKHLNQRLHKLDFETLKQQEIMYSQDFYIQQVERRMSRLKGEINSEEKQALEVKIVELRKTMEERKSTLSLLEEQIKKLHNDLYFIKKSNGKNKDEKESLMNKIGELHLFVDRSEKELNKAKAVKEDLMIEDNLLKLQVKRARELLYSKAEEVLSLEKRKQQLCTAMEERVEEIKVHKAMLTSQIRYVDQQRQTVSSEFHERLSKIDKLKNRYEILTVVMLPPEGEEEKTQSYYVIKAAQEKEELQREGDSLDAKISKAEKEIYALQNTLQVLSSCNNNYKQSFKKVTPSSDEYGIKIQLEEQKRSADEKYRCKQRQIRELQEDIQSMENTFEVIEHLANNAREKLSEKQTLSFQLRKETEEQKPKIQRVTKQCGRLRREIRILRQTNDETLEEQDIQLREIIQFHKDIDQMLVNAMENAEIHVIFQTYFQQNGLELPTAKGPSSRSSSQSSLSSIRSLEDSIPISPPTAKVIELRFPGPPARSDSSRSSSGSNSNIPKGKKLNK</sequence>
<proteinExistence type="inferred from homology"/>
<dbReference type="EMBL" id="CH473961">
    <property type="protein sequence ID" value="EDM01225.1"/>
    <property type="molecule type" value="Genomic_DNA"/>
</dbReference>
<dbReference type="EMBL" id="CH473961">
    <property type="protein sequence ID" value="EDM01224.1"/>
    <property type="status" value="ALT_SEQ"/>
    <property type="molecule type" value="Genomic_DNA"/>
</dbReference>
<dbReference type="RefSeq" id="NP_001101137.1">
    <property type="nucleotide sequence ID" value="NM_001107667.1"/>
</dbReference>
<dbReference type="RefSeq" id="NP_001401969.1">
    <property type="nucleotide sequence ID" value="NM_001415040.1"/>
</dbReference>
<dbReference type="RefSeq" id="XP_017446344.1">
    <property type="nucleotide sequence ID" value="XM_017590855.1"/>
</dbReference>
<dbReference type="SMR" id="D3Z8K2"/>
<dbReference type="FunCoup" id="D3Z8K2">
    <property type="interactions" value="593"/>
</dbReference>
<dbReference type="STRING" id="10116.ENSRNOP00000069773"/>
<dbReference type="PhosphoSitePlus" id="D3Z8K2"/>
<dbReference type="PaxDb" id="10116-ENSRNOP00000061948"/>
<dbReference type="Ensembl" id="ENSRNOT00000084521.2">
    <property type="protein sequence ID" value="ENSRNOP00000069773.1"/>
    <property type="gene ID" value="ENSRNOG00000011440.8"/>
</dbReference>
<dbReference type="GeneID" id="310315"/>
<dbReference type="AGR" id="RGD:1306277"/>
<dbReference type="RGD" id="1306277">
    <property type="gene designation" value="Ccdc39"/>
</dbReference>
<dbReference type="eggNOG" id="ENOG502QS0D">
    <property type="taxonomic scope" value="Eukaryota"/>
</dbReference>
<dbReference type="GeneTree" id="ENSGT00390000015010"/>
<dbReference type="HOGENOM" id="CLU_009793_2_0_1"/>
<dbReference type="InParanoid" id="D3Z8K2"/>
<dbReference type="OMA" id="NSKNCDE"/>
<dbReference type="OrthoDB" id="10259720at2759"/>
<dbReference type="PhylomeDB" id="D3Z8K2"/>
<dbReference type="TreeFam" id="TF329312"/>
<dbReference type="PRO" id="PR:D3Z8K2"/>
<dbReference type="Proteomes" id="UP000002494">
    <property type="component" value="Chromosome 2"/>
</dbReference>
<dbReference type="Proteomes" id="UP000234681">
    <property type="component" value="Chromosome 2"/>
</dbReference>
<dbReference type="Bgee" id="ENSRNOG00000011440">
    <property type="expression patterns" value="Expressed in testis and 19 other cell types or tissues"/>
</dbReference>
<dbReference type="ExpressionAtlas" id="D3Z8K2">
    <property type="expression patterns" value="baseline and differential"/>
</dbReference>
<dbReference type="GO" id="GO:0097729">
    <property type="term" value="C:9+2 motile cilium"/>
    <property type="evidence" value="ECO:0000266"/>
    <property type="project" value="RGD"/>
</dbReference>
<dbReference type="GO" id="GO:0005930">
    <property type="term" value="C:axoneme"/>
    <property type="evidence" value="ECO:0000250"/>
    <property type="project" value="UniProtKB"/>
</dbReference>
<dbReference type="GO" id="GO:0005929">
    <property type="term" value="C:cilium"/>
    <property type="evidence" value="ECO:0000266"/>
    <property type="project" value="RGD"/>
</dbReference>
<dbReference type="GO" id="GO:0005829">
    <property type="term" value="C:cytosol"/>
    <property type="evidence" value="ECO:0000266"/>
    <property type="project" value="RGD"/>
</dbReference>
<dbReference type="GO" id="GO:0005576">
    <property type="term" value="C:extracellular region"/>
    <property type="evidence" value="ECO:0007669"/>
    <property type="project" value="GOC"/>
</dbReference>
<dbReference type="GO" id="GO:0097386">
    <property type="term" value="C:glial cell projection"/>
    <property type="evidence" value="ECO:0000266"/>
    <property type="project" value="RGD"/>
</dbReference>
<dbReference type="GO" id="GO:0070286">
    <property type="term" value="P:axonemal dynein complex assembly"/>
    <property type="evidence" value="ECO:0000250"/>
    <property type="project" value="UniProtKB"/>
</dbReference>
<dbReference type="GO" id="GO:0007420">
    <property type="term" value="P:brain development"/>
    <property type="evidence" value="ECO:0000266"/>
    <property type="project" value="RGD"/>
</dbReference>
<dbReference type="GO" id="GO:0022010">
    <property type="term" value="P:central nervous system myelination"/>
    <property type="evidence" value="ECO:0000266"/>
    <property type="project" value="RGD"/>
</dbReference>
<dbReference type="GO" id="GO:0021987">
    <property type="term" value="P:cerebral cortex development"/>
    <property type="evidence" value="ECO:0000266"/>
    <property type="project" value="RGD"/>
</dbReference>
<dbReference type="GO" id="GO:0090660">
    <property type="term" value="P:cerebrospinal fluid circulation"/>
    <property type="evidence" value="ECO:0000266"/>
    <property type="project" value="RGD"/>
</dbReference>
<dbReference type="GO" id="GO:0003341">
    <property type="term" value="P:cilium movement"/>
    <property type="evidence" value="ECO:0000266"/>
    <property type="project" value="RGD"/>
</dbReference>
<dbReference type="GO" id="GO:0060285">
    <property type="term" value="P:cilium-dependent cell motility"/>
    <property type="evidence" value="ECO:0000250"/>
    <property type="project" value="UniProtKB"/>
</dbReference>
<dbReference type="GO" id="GO:0071907">
    <property type="term" value="P:determination of digestive tract left/right asymmetry"/>
    <property type="evidence" value="ECO:0000266"/>
    <property type="project" value="RGD"/>
</dbReference>
<dbReference type="GO" id="GO:0007368">
    <property type="term" value="P:determination of left/right symmetry"/>
    <property type="evidence" value="ECO:0000266"/>
    <property type="project" value="RGD"/>
</dbReference>
<dbReference type="GO" id="GO:0071910">
    <property type="term" value="P:determination of liver left/right asymmetry"/>
    <property type="evidence" value="ECO:0000266"/>
    <property type="project" value="RGD"/>
</dbReference>
<dbReference type="GO" id="GO:0035469">
    <property type="term" value="P:determination of pancreatic left/right asymmetry"/>
    <property type="evidence" value="ECO:0000266"/>
    <property type="project" value="RGD"/>
</dbReference>
<dbReference type="GO" id="GO:0060287">
    <property type="term" value="P:epithelial cilium movement involved in determination of left/right asymmetry"/>
    <property type="evidence" value="ECO:0000250"/>
    <property type="project" value="UniProtKB"/>
</dbReference>
<dbReference type="GO" id="GO:0003351">
    <property type="term" value="P:epithelial cilium movement involved in extracellular fluid movement"/>
    <property type="evidence" value="ECO:0000266"/>
    <property type="project" value="RGD"/>
</dbReference>
<dbReference type="GO" id="GO:0061966">
    <property type="term" value="P:establishment of left/right asymmetry"/>
    <property type="evidence" value="ECO:0000266"/>
    <property type="project" value="RGD"/>
</dbReference>
<dbReference type="GO" id="GO:0051649">
    <property type="term" value="P:establishment of localization in cell"/>
    <property type="evidence" value="ECO:0000266"/>
    <property type="project" value="RGD"/>
</dbReference>
<dbReference type="GO" id="GO:0030317">
    <property type="term" value="P:flagellated sperm motility"/>
    <property type="evidence" value="ECO:0000266"/>
    <property type="project" value="RGD"/>
</dbReference>
<dbReference type="GO" id="GO:0007507">
    <property type="term" value="P:heart development"/>
    <property type="evidence" value="ECO:0000266"/>
    <property type="project" value="RGD"/>
</dbReference>
<dbReference type="GO" id="GO:0001947">
    <property type="term" value="P:heart looping"/>
    <property type="evidence" value="ECO:0000266"/>
    <property type="project" value="RGD"/>
</dbReference>
<dbReference type="GO" id="GO:0036159">
    <property type="term" value="P:inner dynein arm assembly"/>
    <property type="evidence" value="ECO:0000266"/>
    <property type="project" value="RGD"/>
</dbReference>
<dbReference type="GO" id="GO:0040011">
    <property type="term" value="P:locomotion"/>
    <property type="evidence" value="ECO:0000266"/>
    <property type="project" value="RGD"/>
</dbReference>
<dbReference type="GO" id="GO:0030324">
    <property type="term" value="P:lung development"/>
    <property type="evidence" value="ECO:0000266"/>
    <property type="project" value="RGD"/>
</dbReference>
<dbReference type="GO" id="GO:0014004">
    <property type="term" value="P:microglia differentiation"/>
    <property type="evidence" value="ECO:0000266"/>
    <property type="project" value="RGD"/>
</dbReference>
<dbReference type="GO" id="GO:0044458">
    <property type="term" value="P:motile cilium assembly"/>
    <property type="evidence" value="ECO:0000266"/>
    <property type="project" value="RGD"/>
</dbReference>
<dbReference type="GO" id="GO:0007399">
    <property type="term" value="P:nervous system development"/>
    <property type="evidence" value="ECO:0000266"/>
    <property type="project" value="RGD"/>
</dbReference>
<dbReference type="GO" id="GO:0150076">
    <property type="term" value="P:neuroinflammatory response"/>
    <property type="evidence" value="ECO:0000266"/>
    <property type="project" value="RGD"/>
</dbReference>
<dbReference type="GO" id="GO:0042551">
    <property type="term" value="P:neuron maturation"/>
    <property type="evidence" value="ECO:0000266"/>
    <property type="project" value="RGD"/>
</dbReference>
<dbReference type="GO" id="GO:0048812">
    <property type="term" value="P:neuron projection morphogenesis"/>
    <property type="evidence" value="ECO:0000266"/>
    <property type="project" value="RGD"/>
</dbReference>
<dbReference type="GO" id="GO:0061512">
    <property type="term" value="P:protein localization to cilium"/>
    <property type="evidence" value="ECO:0000266"/>
    <property type="project" value="RGD"/>
</dbReference>
<dbReference type="GO" id="GO:0003356">
    <property type="term" value="P:regulation of cilium beat frequency"/>
    <property type="evidence" value="ECO:0000266"/>
    <property type="project" value="RGD"/>
</dbReference>
<dbReference type="GO" id="GO:0060074">
    <property type="term" value="P:synapse maturation"/>
    <property type="evidence" value="ECO:0000266"/>
    <property type="project" value="RGD"/>
</dbReference>
<dbReference type="InterPro" id="IPR033290">
    <property type="entry name" value="CCDC39"/>
</dbReference>
<dbReference type="PANTHER" id="PTHR18962">
    <property type="entry name" value="COILED-COIL DOMAIN-CONTAINING PROTEIN 39"/>
    <property type="match status" value="1"/>
</dbReference>
<dbReference type="PANTHER" id="PTHR18962:SF0">
    <property type="entry name" value="COILED-COIL DOMAIN-CONTAINING PROTEIN 39"/>
    <property type="match status" value="1"/>
</dbReference>
<dbReference type="Pfam" id="PF24161">
    <property type="entry name" value="CCDC39"/>
    <property type="match status" value="1"/>
</dbReference>